<reference key="1">
    <citation type="journal article" date="2008" name="PLoS Genet.">
        <title>Genomic islands in the pathogenic filamentous fungus Aspergillus fumigatus.</title>
        <authorList>
            <person name="Fedorova N.D."/>
            <person name="Khaldi N."/>
            <person name="Joardar V.S."/>
            <person name="Maiti R."/>
            <person name="Amedeo P."/>
            <person name="Anderson M.J."/>
            <person name="Crabtree J."/>
            <person name="Silva J.C."/>
            <person name="Badger J.H."/>
            <person name="Albarraq A."/>
            <person name="Angiuoli S."/>
            <person name="Bussey H."/>
            <person name="Bowyer P."/>
            <person name="Cotty P.J."/>
            <person name="Dyer P.S."/>
            <person name="Egan A."/>
            <person name="Galens K."/>
            <person name="Fraser-Liggett C.M."/>
            <person name="Haas B.J."/>
            <person name="Inman J.M."/>
            <person name="Kent R."/>
            <person name="Lemieux S."/>
            <person name="Malavazi I."/>
            <person name="Orvis J."/>
            <person name="Roemer T."/>
            <person name="Ronning C.M."/>
            <person name="Sundaram J.P."/>
            <person name="Sutton G."/>
            <person name="Turner G."/>
            <person name="Venter J.C."/>
            <person name="White O.R."/>
            <person name="Whitty B.R."/>
            <person name="Youngman P."/>
            <person name="Wolfe K.H."/>
            <person name="Goldman G.H."/>
            <person name="Wortman J.R."/>
            <person name="Jiang B."/>
            <person name="Denning D.W."/>
            <person name="Nierman W.C."/>
        </authorList>
    </citation>
    <scope>NUCLEOTIDE SEQUENCE [LARGE SCALE GENOMIC DNA]</scope>
    <source>
        <strain>ATCC 1020 / DSM 3700 / CBS 544.65 / FGSC A1164 / JCM 1740 / NRRL 181 / WB 181</strain>
    </source>
</reference>
<organism>
    <name type="scientific">Neosartorya fischeri (strain ATCC 1020 / DSM 3700 / CBS 544.65 / FGSC A1164 / JCM 1740 / NRRL 181 / WB 181)</name>
    <name type="common">Aspergillus fischerianus</name>
    <dbReference type="NCBI Taxonomy" id="331117"/>
    <lineage>
        <taxon>Eukaryota</taxon>
        <taxon>Fungi</taxon>
        <taxon>Dikarya</taxon>
        <taxon>Ascomycota</taxon>
        <taxon>Pezizomycotina</taxon>
        <taxon>Eurotiomycetes</taxon>
        <taxon>Eurotiomycetidae</taxon>
        <taxon>Eurotiales</taxon>
        <taxon>Aspergillaceae</taxon>
        <taxon>Aspergillus</taxon>
        <taxon>Aspergillus subgen. Fumigati</taxon>
    </lineage>
</organism>
<proteinExistence type="inferred from homology"/>
<keyword id="KW-0010">Activator</keyword>
<keyword id="KW-0067">ATP-binding</keyword>
<keyword id="KW-0963">Cytoplasm</keyword>
<keyword id="KW-0418">Kinase</keyword>
<keyword id="KW-0547">Nucleotide-binding</keyword>
<keyword id="KW-0539">Nucleus</keyword>
<keyword id="KW-0597">Phosphoprotein</keyword>
<keyword id="KW-1185">Reference proteome</keyword>
<keyword id="KW-0723">Serine/threonine-protein kinase</keyword>
<keyword id="KW-0804">Transcription</keyword>
<keyword id="KW-0805">Transcription regulation</keyword>
<keyword id="KW-0808">Transferase</keyword>
<gene>
    <name type="primary">hog1</name>
    <name type="ORF">NFIA_012610</name>
</gene>
<comment type="function">
    <text evidence="4">Proline-directed serine/threonine-protein kinase involved in a signal transduction pathway that is activated by changes in the osmolarity of the extracellular environment. Controls osmotic regulation of transcription of target genes.</text>
</comment>
<comment type="catalytic activity">
    <reaction evidence="2">
        <text>L-seryl-[protein] + ATP = O-phospho-L-seryl-[protein] + ADP + H(+)</text>
        <dbReference type="Rhea" id="RHEA:17989"/>
        <dbReference type="Rhea" id="RHEA-COMP:9863"/>
        <dbReference type="Rhea" id="RHEA-COMP:11604"/>
        <dbReference type="ChEBI" id="CHEBI:15378"/>
        <dbReference type="ChEBI" id="CHEBI:29999"/>
        <dbReference type="ChEBI" id="CHEBI:30616"/>
        <dbReference type="ChEBI" id="CHEBI:83421"/>
        <dbReference type="ChEBI" id="CHEBI:456216"/>
        <dbReference type="EC" id="2.7.11.24"/>
    </reaction>
    <physiologicalReaction direction="left-to-right" evidence="2">
        <dbReference type="Rhea" id="RHEA:17990"/>
    </physiologicalReaction>
</comment>
<comment type="catalytic activity">
    <reaction evidence="2">
        <text>L-threonyl-[protein] + ATP = O-phospho-L-threonyl-[protein] + ADP + H(+)</text>
        <dbReference type="Rhea" id="RHEA:46608"/>
        <dbReference type="Rhea" id="RHEA-COMP:11060"/>
        <dbReference type="Rhea" id="RHEA-COMP:11605"/>
        <dbReference type="ChEBI" id="CHEBI:15378"/>
        <dbReference type="ChEBI" id="CHEBI:30013"/>
        <dbReference type="ChEBI" id="CHEBI:30616"/>
        <dbReference type="ChEBI" id="CHEBI:61977"/>
        <dbReference type="ChEBI" id="CHEBI:456216"/>
        <dbReference type="EC" id="2.7.11.24"/>
    </reaction>
    <physiologicalReaction direction="left-to-right" evidence="2">
        <dbReference type="Rhea" id="RHEA:46609"/>
    </physiologicalReaction>
</comment>
<comment type="cofactor">
    <cofactor evidence="3">
        <name>Mg(2+)</name>
        <dbReference type="ChEBI" id="CHEBI:18420"/>
    </cofactor>
</comment>
<comment type="activity regulation">
    <text evidence="1">Activated by tyrosine and threonine phosphorylation.</text>
</comment>
<comment type="subcellular location">
    <subcellularLocation>
        <location evidence="1">Cytoplasm</location>
    </subcellularLocation>
    <subcellularLocation>
        <location evidence="1">Nucleus</location>
    </subcellularLocation>
</comment>
<comment type="domain">
    <text>The TXY motif contains the threonine and tyrosine residues whose phosphorylation activates the MAP kinases.</text>
</comment>
<comment type="PTM">
    <text evidence="1">Dually phosphorylated on Thr-171 and Tyr-173, which activates the enzyme.</text>
</comment>
<comment type="similarity">
    <text evidence="5">Belongs to the protein kinase superfamily. Ser/Thr protein kinase family. MAP kinase subfamily. HOG1 sub-subfamily.</text>
</comment>
<feature type="chain" id="PRO_0000289697" description="Mitogen-activated protein kinase hog1">
    <location>
        <begin position="1"/>
        <end position="366"/>
    </location>
</feature>
<feature type="domain" description="Protein kinase" evidence="5">
    <location>
        <begin position="20"/>
        <end position="299"/>
    </location>
</feature>
<feature type="short sequence motif" description="TXY">
    <location>
        <begin position="171"/>
        <end position="173"/>
    </location>
</feature>
<feature type="active site" description="Proton acceptor" evidence="5 6">
    <location>
        <position position="141"/>
    </location>
</feature>
<feature type="binding site" evidence="5">
    <location>
        <begin position="26"/>
        <end position="34"/>
    </location>
    <ligand>
        <name>ATP</name>
        <dbReference type="ChEBI" id="CHEBI:30616"/>
    </ligand>
</feature>
<feature type="binding site" evidence="5">
    <location>
        <position position="49"/>
    </location>
    <ligand>
        <name>ATP</name>
        <dbReference type="ChEBI" id="CHEBI:30616"/>
    </ligand>
</feature>
<feature type="modified residue" description="Phosphothreonine" evidence="1">
    <location>
        <position position="171"/>
    </location>
</feature>
<feature type="modified residue" description="Phosphotyrosine" evidence="1">
    <location>
        <position position="173"/>
    </location>
</feature>
<evidence type="ECO:0000250" key="1"/>
<evidence type="ECO:0000250" key="2">
    <source>
        <dbReference type="UniProtKB" id="P32485"/>
    </source>
</evidence>
<evidence type="ECO:0000250" key="3">
    <source>
        <dbReference type="UniProtKB" id="Q16539"/>
    </source>
</evidence>
<evidence type="ECO:0000250" key="4">
    <source>
        <dbReference type="UniProtKB" id="Q4WSF6"/>
    </source>
</evidence>
<evidence type="ECO:0000255" key="5">
    <source>
        <dbReference type="PROSITE-ProRule" id="PRU00159"/>
    </source>
</evidence>
<evidence type="ECO:0000255" key="6">
    <source>
        <dbReference type="PROSITE-ProRule" id="PRU10027"/>
    </source>
</evidence>
<name>HOG1_NEOFI</name>
<protein>
    <recommendedName>
        <fullName>Mitogen-activated protein kinase hog1</fullName>
        <shortName>MAP kinase hog1</shortName>
        <ecNumber evidence="2">2.7.11.24</ecNumber>
    </recommendedName>
</protein>
<dbReference type="EC" id="2.7.11.24" evidence="2"/>
<dbReference type="EMBL" id="DS027688">
    <property type="protein sequence ID" value="EAW22572.1"/>
    <property type="molecule type" value="Genomic_DNA"/>
</dbReference>
<dbReference type="RefSeq" id="XP_001264469.1">
    <property type="nucleotide sequence ID" value="XM_001264468.1"/>
</dbReference>
<dbReference type="SMR" id="A1D2C9"/>
<dbReference type="STRING" id="331117.A1D2C9"/>
<dbReference type="EnsemblFungi" id="EAW22572">
    <property type="protein sequence ID" value="EAW22572"/>
    <property type="gene ID" value="NFIA_012610"/>
</dbReference>
<dbReference type="GeneID" id="4591801"/>
<dbReference type="KEGG" id="nfi:NFIA_012610"/>
<dbReference type="VEuPathDB" id="FungiDB:NFIA_012610"/>
<dbReference type="eggNOG" id="KOG0660">
    <property type="taxonomic scope" value="Eukaryota"/>
</dbReference>
<dbReference type="HOGENOM" id="CLU_000288_181_1_1"/>
<dbReference type="OMA" id="NRYTDLN"/>
<dbReference type="OrthoDB" id="192887at2759"/>
<dbReference type="Proteomes" id="UP000006702">
    <property type="component" value="Unassembled WGS sequence"/>
</dbReference>
<dbReference type="GO" id="GO:0005737">
    <property type="term" value="C:cytoplasm"/>
    <property type="evidence" value="ECO:0007669"/>
    <property type="project" value="UniProtKB-SubCell"/>
</dbReference>
<dbReference type="GO" id="GO:0005634">
    <property type="term" value="C:nucleus"/>
    <property type="evidence" value="ECO:0007669"/>
    <property type="project" value="UniProtKB-SubCell"/>
</dbReference>
<dbReference type="GO" id="GO:0005524">
    <property type="term" value="F:ATP binding"/>
    <property type="evidence" value="ECO:0007669"/>
    <property type="project" value="UniProtKB-KW"/>
</dbReference>
<dbReference type="GO" id="GO:0004707">
    <property type="term" value="F:MAP kinase activity"/>
    <property type="evidence" value="ECO:0007669"/>
    <property type="project" value="UniProtKB-EC"/>
</dbReference>
<dbReference type="GO" id="GO:0106310">
    <property type="term" value="F:protein serine kinase activity"/>
    <property type="evidence" value="ECO:0007669"/>
    <property type="project" value="RHEA"/>
</dbReference>
<dbReference type="GO" id="GO:0051403">
    <property type="term" value="P:stress-activated MAPK cascade"/>
    <property type="evidence" value="ECO:0007669"/>
    <property type="project" value="InterPro"/>
</dbReference>
<dbReference type="CDD" id="cd07856">
    <property type="entry name" value="STKc_Sty1_Hog1"/>
    <property type="match status" value="1"/>
</dbReference>
<dbReference type="FunFam" id="1.10.510.10:FF:000049">
    <property type="entry name" value="Mitogen-activated protein kinase"/>
    <property type="match status" value="1"/>
</dbReference>
<dbReference type="FunFam" id="3.30.200.20:FF:000050">
    <property type="entry name" value="Mitogen-activated protein kinase"/>
    <property type="match status" value="1"/>
</dbReference>
<dbReference type="Gene3D" id="3.30.200.20">
    <property type="entry name" value="Phosphorylase Kinase, domain 1"/>
    <property type="match status" value="1"/>
</dbReference>
<dbReference type="Gene3D" id="1.10.510.10">
    <property type="entry name" value="Transferase(Phosphotransferase) domain 1"/>
    <property type="match status" value="1"/>
</dbReference>
<dbReference type="InterPro" id="IPR011009">
    <property type="entry name" value="Kinase-like_dom_sf"/>
</dbReference>
<dbReference type="InterPro" id="IPR050117">
    <property type="entry name" value="MAP_kinase"/>
</dbReference>
<dbReference type="InterPro" id="IPR003527">
    <property type="entry name" value="MAP_kinase_CS"/>
</dbReference>
<dbReference type="InterPro" id="IPR008352">
    <property type="entry name" value="MAPK_p38-like"/>
</dbReference>
<dbReference type="InterPro" id="IPR038783">
    <property type="entry name" value="MAPK_Sty1/Hog1"/>
</dbReference>
<dbReference type="InterPro" id="IPR000719">
    <property type="entry name" value="Prot_kinase_dom"/>
</dbReference>
<dbReference type="InterPro" id="IPR017441">
    <property type="entry name" value="Protein_kinase_ATP_BS"/>
</dbReference>
<dbReference type="InterPro" id="IPR008271">
    <property type="entry name" value="Ser/Thr_kinase_AS"/>
</dbReference>
<dbReference type="PANTHER" id="PTHR24055">
    <property type="entry name" value="MITOGEN-ACTIVATED PROTEIN KINASE"/>
    <property type="match status" value="1"/>
</dbReference>
<dbReference type="Pfam" id="PF00069">
    <property type="entry name" value="Pkinase"/>
    <property type="match status" value="1"/>
</dbReference>
<dbReference type="PRINTS" id="PR01773">
    <property type="entry name" value="P38MAPKINASE"/>
</dbReference>
<dbReference type="SMART" id="SM00220">
    <property type="entry name" value="S_TKc"/>
    <property type="match status" value="1"/>
</dbReference>
<dbReference type="SUPFAM" id="SSF56112">
    <property type="entry name" value="Protein kinase-like (PK-like)"/>
    <property type="match status" value="1"/>
</dbReference>
<dbReference type="PROSITE" id="PS01351">
    <property type="entry name" value="MAPK"/>
    <property type="match status" value="1"/>
</dbReference>
<dbReference type="PROSITE" id="PS00107">
    <property type="entry name" value="PROTEIN_KINASE_ATP"/>
    <property type="match status" value="1"/>
</dbReference>
<dbReference type="PROSITE" id="PS50011">
    <property type="entry name" value="PROTEIN_KINASE_DOM"/>
    <property type="match status" value="1"/>
</dbReference>
<dbReference type="PROSITE" id="PS00108">
    <property type="entry name" value="PROTEIN_KINASE_ST"/>
    <property type="match status" value="1"/>
</dbReference>
<sequence>MAEFVRAQIFGTTFEITSRYTDLQPVGMGAFGLVCSARDQLTGQPVAVKKIMKPFSTPVLSKRTYRELKLLKHLRHENIISLSDIFISPLEDIYFVTELLGTDLHRLLTSRPLEKQFIQYFLYQILRGLKYVHSAGVVHRDLKPSNILINENCDLKICDFGLARIQDPQMTGYVSTRYYRAPEIMLTWQKYDVEVDIWSAGCIFAEMLEGKPLFPGKDHVNQFSIITELLGTPPDDVIQTICSENTLRFVKSLPKRERQPLANKFKNADPEAVDLLERMLVFDPKKRIRAGEALAHEYLTPYHDPTDEPEAEEKFDWSFNDADLPVDTWKIMMYSEILDFHNIDQGNDAGQVLMEGGVAQAHQNYA</sequence>
<accession>A1D2C9</accession>